<evidence type="ECO:0000256" key="1">
    <source>
        <dbReference type="SAM" id="MobiDB-lite"/>
    </source>
</evidence>
<evidence type="ECO:0000269" key="2">
    <source>
    </source>
</evidence>
<evidence type="ECO:0000269" key="3">
    <source>
    </source>
</evidence>
<evidence type="ECO:0000269" key="4">
    <source>
    </source>
</evidence>
<evidence type="ECO:0000269" key="5">
    <source>
    </source>
</evidence>
<evidence type="ECO:0000269" key="6">
    <source>
    </source>
</evidence>
<evidence type="ECO:0000269" key="7">
    <source>
    </source>
</evidence>
<evidence type="ECO:0000269" key="8">
    <source>
    </source>
</evidence>
<evidence type="ECO:0000269" key="9">
    <source>
    </source>
</evidence>
<evidence type="ECO:0000269" key="10">
    <source>
    </source>
</evidence>
<evidence type="ECO:0000269" key="11">
    <source>
    </source>
</evidence>
<evidence type="ECO:0000269" key="12">
    <source>
    </source>
</evidence>
<evidence type="ECO:0000305" key="13"/>
<evidence type="ECO:0007744" key="14">
    <source>
    </source>
</evidence>
<evidence type="ECO:0007744" key="15">
    <source>
    </source>
</evidence>
<evidence type="ECO:0007744" key="16">
    <source>
    </source>
</evidence>
<evidence type="ECO:0007829" key="17">
    <source>
        <dbReference type="PDB" id="6FC3"/>
    </source>
</evidence>
<gene>
    <name type="primary">CAF20</name>
    <name type="synonym">CAF2</name>
    <name type="synonym">CAP20</name>
    <name type="ordered locus">YOR276W</name>
    <name type="ORF">O5453W</name>
</gene>
<reference key="1">
    <citation type="journal article" date="1989" name="Nucleic Acids Res.">
        <title>Nucleotide sequence of the gene encoding a 20 kDa protein associated with the cap binding protein eIF-4E from Saccharomyces cerevisiae.</title>
        <authorList>
            <person name="Altmann M."/>
            <person name="Krieger M."/>
            <person name="Trachsel H."/>
        </authorList>
    </citation>
    <scope>NUCLEOTIDE SEQUENCE [GENOMIC DNA]</scope>
</reference>
<reference key="2">
    <citation type="journal article" date="1996" name="Yeast">
        <title>DNA sequence analysis of the VPH1-SNF2 region on chromosome XV of Saccharomyces cerevisiae.</title>
        <authorList>
            <person name="Cheret G."/>
            <person name="Bernardi A."/>
            <person name="Sor F.J."/>
        </authorList>
    </citation>
    <scope>NUCLEOTIDE SEQUENCE [GENOMIC DNA]</scope>
    <source>
        <strain>ATCC 204508 / S288c</strain>
    </source>
</reference>
<reference key="3">
    <citation type="journal article" date="1997" name="Nature">
        <title>The nucleotide sequence of Saccharomyces cerevisiae chromosome XV.</title>
        <authorList>
            <person name="Dujon B."/>
            <person name="Albermann K."/>
            <person name="Aldea M."/>
            <person name="Alexandraki D."/>
            <person name="Ansorge W."/>
            <person name="Arino J."/>
            <person name="Benes V."/>
            <person name="Bohn C."/>
            <person name="Bolotin-Fukuhara M."/>
            <person name="Bordonne R."/>
            <person name="Boyer J."/>
            <person name="Camasses A."/>
            <person name="Casamayor A."/>
            <person name="Casas C."/>
            <person name="Cheret G."/>
            <person name="Cziepluch C."/>
            <person name="Daignan-Fornier B."/>
            <person name="Dang V.-D."/>
            <person name="de Haan M."/>
            <person name="Delius H."/>
            <person name="Durand P."/>
            <person name="Fairhead C."/>
            <person name="Feldmann H."/>
            <person name="Gaillon L."/>
            <person name="Galisson F."/>
            <person name="Gamo F.-J."/>
            <person name="Gancedo C."/>
            <person name="Goffeau A."/>
            <person name="Goulding S.E."/>
            <person name="Grivell L.A."/>
            <person name="Habbig B."/>
            <person name="Hand N.J."/>
            <person name="Hani J."/>
            <person name="Hattenhorst U."/>
            <person name="Hebling U."/>
            <person name="Hernando Y."/>
            <person name="Herrero E."/>
            <person name="Heumann K."/>
            <person name="Hiesel R."/>
            <person name="Hilger F."/>
            <person name="Hofmann B."/>
            <person name="Hollenberg C.P."/>
            <person name="Hughes B."/>
            <person name="Jauniaux J.-C."/>
            <person name="Kalogeropoulos A."/>
            <person name="Katsoulou C."/>
            <person name="Kordes E."/>
            <person name="Lafuente M.J."/>
            <person name="Landt O."/>
            <person name="Louis E.J."/>
            <person name="Maarse A.C."/>
            <person name="Madania A."/>
            <person name="Mannhaupt G."/>
            <person name="Marck C."/>
            <person name="Martin R.P."/>
            <person name="Mewes H.-W."/>
            <person name="Michaux G."/>
            <person name="Paces V."/>
            <person name="Parle-McDermott A.G."/>
            <person name="Pearson B.M."/>
            <person name="Perrin A."/>
            <person name="Pettersson B."/>
            <person name="Poch O."/>
            <person name="Pohl T.M."/>
            <person name="Poirey R."/>
            <person name="Portetelle D."/>
            <person name="Pujol A."/>
            <person name="Purnelle B."/>
            <person name="Ramezani Rad M."/>
            <person name="Rechmann S."/>
            <person name="Schwager C."/>
            <person name="Schweizer M."/>
            <person name="Sor F."/>
            <person name="Sterky F."/>
            <person name="Tarassov I.A."/>
            <person name="Teodoru C."/>
            <person name="Tettelin H."/>
            <person name="Thierry A."/>
            <person name="Tobiasch E."/>
            <person name="Tzermia M."/>
            <person name="Uhlen M."/>
            <person name="Unseld M."/>
            <person name="Valens M."/>
            <person name="Vandenbol M."/>
            <person name="Vetter I."/>
            <person name="Vlcek C."/>
            <person name="Voet M."/>
            <person name="Volckaert G."/>
            <person name="Voss H."/>
            <person name="Wambutt R."/>
            <person name="Wedler H."/>
            <person name="Wiemann S."/>
            <person name="Winsor B."/>
            <person name="Wolfe K.H."/>
            <person name="Zollner A."/>
            <person name="Zumstein E."/>
            <person name="Kleine K."/>
        </authorList>
    </citation>
    <scope>NUCLEOTIDE SEQUENCE [LARGE SCALE GENOMIC DNA]</scope>
    <source>
        <strain>ATCC 204508 / S288c</strain>
    </source>
</reference>
<reference key="4">
    <citation type="journal article" date="2014" name="G3 (Bethesda)">
        <title>The reference genome sequence of Saccharomyces cerevisiae: Then and now.</title>
        <authorList>
            <person name="Engel S.R."/>
            <person name="Dietrich F.S."/>
            <person name="Fisk D.G."/>
            <person name="Binkley G."/>
            <person name="Balakrishnan R."/>
            <person name="Costanzo M.C."/>
            <person name="Dwight S.S."/>
            <person name="Hitz B.C."/>
            <person name="Karra K."/>
            <person name="Nash R.S."/>
            <person name="Weng S."/>
            <person name="Wong E.D."/>
            <person name="Lloyd P."/>
            <person name="Skrzypek M.S."/>
            <person name="Miyasato S.R."/>
            <person name="Simison M."/>
            <person name="Cherry J.M."/>
        </authorList>
    </citation>
    <scope>GENOME REANNOTATION</scope>
    <source>
        <strain>ATCC 204508 / S288c</strain>
    </source>
</reference>
<reference key="5">
    <citation type="journal article" date="1993" name="Nucleic Acids Res.">
        <title>SnR31, snR32, and snR33: three novel, non-essential snRNAs from Saccharomyces cerevisiae.</title>
        <authorList>
            <person name="Balakin A.G."/>
            <person name="Schneider G.S."/>
            <person name="Corbett M.S."/>
            <person name="Ni J."/>
            <person name="Fournier M.J."/>
        </authorList>
    </citation>
    <scope>NUCLEOTIDE SEQUENCE OF 156-161</scope>
</reference>
<reference key="6">
    <citation type="journal article" date="1992" name="J. Biol. Chem.">
        <title>Interactions of the eIF-4F subunits in the yeast Saccharomyces cerevisiae.</title>
        <authorList>
            <person name="Lanker S."/>
            <person name="Mueller P.P."/>
            <person name="Altmann M."/>
            <person name="Goyer C."/>
            <person name="Sonenberg N."/>
            <person name="Trachsel H."/>
        </authorList>
    </citation>
    <scope>INTERACTION WITH TIF45</scope>
</reference>
<reference key="7">
    <citation type="journal article" date="1995" name="J. Biol. Chem.">
        <title>Characterization of the in vivo phosphorylation sites of the mRNA.cap-binding complex proteins eukaryotic initiation factor-4E and p20 in Saccharomyces cerevisiae.</title>
        <authorList>
            <person name="Zanchin N.I.T."/>
            <person name="McCarthy J.E.G."/>
        </authorList>
    </citation>
    <scope>IDENTIFICATION OF FRAMESHIFT</scope>
    <scope>PHOSPHORYLATION</scope>
</reference>
<reference key="8">
    <citation type="journal article" date="1997" name="EMBO J.">
        <title>A novel inhibitor of cap-dependent translation initiation in yeast: p20 competes with eIF4G for binding to eIF4E.</title>
        <authorList>
            <person name="Altmann M."/>
            <person name="Schmitz N."/>
            <person name="Berset C."/>
            <person name="Trachsel H."/>
        </authorList>
    </citation>
    <scope>FUNCTION</scope>
    <scope>INTERACTION WITH TIF45</scope>
</reference>
<reference key="9">
    <citation type="journal article" date="1997" name="Proc. Natl. Acad. Sci. U.S.A.">
        <title>The p20 and Ded1 proteins have antagonistic roles in eIF4E-dependent translation in Saccharomyces cerevisiae.</title>
        <authorList>
            <person name="de la Cruz J."/>
            <person name="Iost I."/>
            <person name="Kressler D."/>
            <person name="Linder P."/>
        </authorList>
    </citation>
    <scope>CHARACTERIZATION</scope>
</reference>
<reference key="10">
    <citation type="journal article" date="1998" name="EMBO J.">
        <title>Cooperative modulation by eIF4G of eIF4E-binding to the mRNA 5' cap in yeast involves a site partially shared by p20.</title>
        <authorList>
            <person name="Ptushkina M."/>
            <person name="von der Haar T."/>
            <person name="Vasilescu S."/>
            <person name="Frank R."/>
            <person name="Birkenhaeger R."/>
            <person name="McCarthy J.E.G."/>
        </authorList>
    </citation>
    <scope>FUNCTION</scope>
    <scope>INTERACTION WITH TIF45</scope>
</reference>
<reference key="11">
    <citation type="journal article" date="2000" name="Mol. Cell. Biol.">
        <title>Eap1p, a novel eukaryotic translation initiation factor 4E-associated protein in Saccharomyces cerevisiae.</title>
        <authorList>
            <person name="Cosentino G.P."/>
            <person name="Schmelzle T."/>
            <person name="Haghighat A."/>
            <person name="Helliwell S.B."/>
            <person name="Hall M.N."/>
            <person name="Sonenberg N."/>
        </authorList>
    </citation>
    <scope>FUNCTION</scope>
    <scope>INTERACTION WITH TIF45</scope>
</reference>
<reference key="12">
    <citation type="journal article" date="2002" name="J. Mol. Biol.">
        <title>Modulation of eukaryotic mRNA stability via the cap-binding translation complex eIF4F.</title>
        <authorList>
            <person name="Ramirez C.V."/>
            <person name="Vilela C."/>
            <person name="Berthelot K."/>
            <person name="McCarthy J.E.G."/>
        </authorList>
    </citation>
    <scope>FUNCTION IN MRNA STABILIZATION</scope>
</reference>
<reference key="13">
    <citation type="journal article" date="2002" name="Mol. Microbiol.">
        <title>Intracellular translation initiation factor levels in Saccharomyces cerevisiae and their role in cap-complex function.</title>
        <authorList>
            <person name="von der Haar T."/>
            <person name="McCarthy J.E.G."/>
        </authorList>
    </citation>
    <scope>FUNCTION</scope>
    <scope>INTERACTION WITH TIF45</scope>
</reference>
<reference key="14">
    <citation type="journal article" date="2003" name="Nature">
        <title>Global analysis of protein localization in budding yeast.</title>
        <authorList>
            <person name="Huh W.-K."/>
            <person name="Falvo J.V."/>
            <person name="Gerke L.C."/>
            <person name="Carroll A.S."/>
            <person name="Howson R.W."/>
            <person name="Weissman J.S."/>
            <person name="O'Shea E.K."/>
        </authorList>
    </citation>
    <scope>SUBCELLULAR LOCATION [LARGE SCALE ANALYSIS]</scope>
</reference>
<reference key="15">
    <citation type="journal article" date="2003" name="Nature">
        <title>Global analysis of protein expression in yeast.</title>
        <authorList>
            <person name="Ghaemmaghami S."/>
            <person name="Huh W.-K."/>
            <person name="Bower K."/>
            <person name="Howson R.W."/>
            <person name="Belle A."/>
            <person name="Dephoure N."/>
            <person name="O'Shea E.K."/>
            <person name="Weissman J.S."/>
        </authorList>
    </citation>
    <scope>LEVEL OF PROTEIN EXPRESSION [LARGE SCALE ANALYSIS]</scope>
</reference>
<reference key="16">
    <citation type="journal article" date="2006" name="Eukaryot. Cell">
        <title>Identification of translational regulation target genes during filamentous growth in Saccharomyces cerevisiae: regulatory role of Caf20 and Dhh1.</title>
        <authorList>
            <person name="Park Y.-U."/>
            <person name="Hur H."/>
            <person name="Ka M."/>
            <person name="Kim J."/>
        </authorList>
    </citation>
    <scope>FUNCTION IN REGULATION OF STE12 TRANSLATION</scope>
</reference>
<reference key="17">
    <citation type="journal article" date="2006" name="Yeast">
        <title>Regulation of translation initiation by the yeast eIF4E binding proteins is required for the pseudohyphal response.</title>
        <authorList>
            <person name="Ibrahimo S."/>
            <person name="Holmes L.E.A."/>
            <person name="Ashe M.P."/>
        </authorList>
    </citation>
    <scope>FUNCTION IN PSEUDOHYPHAL GROWTH</scope>
    <scope>MUTAGENESIS OF TYR-4 AND LEU-9</scope>
</reference>
<reference key="18">
    <citation type="journal article" date="2007" name="J. Proteome Res.">
        <title>Large-scale phosphorylation analysis of alpha-factor-arrested Saccharomyces cerevisiae.</title>
        <authorList>
            <person name="Li X."/>
            <person name="Gerber S.A."/>
            <person name="Rudner A.D."/>
            <person name="Beausoleil S.A."/>
            <person name="Haas W."/>
            <person name="Villen J."/>
            <person name="Elias J.E."/>
            <person name="Gygi S.P."/>
        </authorList>
    </citation>
    <scope>PHOSPHORYLATION [LARGE SCALE ANALYSIS] AT SER-91 AND THR-102</scope>
    <scope>IDENTIFICATION BY MASS SPECTROMETRY [LARGE SCALE ANALYSIS]</scope>
    <source>
        <strain>ADR376</strain>
    </source>
</reference>
<reference key="19">
    <citation type="journal article" date="2008" name="Mol. Cell. Proteomics">
        <title>A multidimensional chromatography technology for in-depth phosphoproteome analysis.</title>
        <authorList>
            <person name="Albuquerque C.P."/>
            <person name="Smolka M.B."/>
            <person name="Payne S.H."/>
            <person name="Bafna V."/>
            <person name="Eng J."/>
            <person name="Zhou H."/>
        </authorList>
    </citation>
    <scope>PHOSPHORYLATION [LARGE SCALE ANALYSIS] AT SER-91; THR-102 AND SER-154</scope>
    <scope>IDENTIFICATION BY MASS SPECTROMETRY [LARGE SCALE ANALYSIS]</scope>
</reference>
<reference key="20">
    <citation type="journal article" date="2009" name="Science">
        <title>Global analysis of Cdk1 substrate phosphorylation sites provides insights into evolution.</title>
        <authorList>
            <person name="Holt L.J."/>
            <person name="Tuch B.B."/>
            <person name="Villen J."/>
            <person name="Johnson A.D."/>
            <person name="Gygi S.P."/>
            <person name="Morgan D.O."/>
        </authorList>
    </citation>
    <scope>PHOSPHORYLATION [LARGE SCALE ANALYSIS] AT SER-78; SER-91; THR-99; THR-101; THR-102 AND SER-154</scope>
    <scope>IDENTIFICATION BY MASS SPECTROMETRY [LARGE SCALE ANALYSIS]</scope>
</reference>
<accession>P12962</accession>
<accession>D6W2X6</accession>
<comment type="function">
    <text evidence="2 3 4 8 9 11 12">Acts as an inhibitor of cap-dependent translation. Competes with eIF4G1/TIF4631 and EAP1 for binding to eIF4E/TIF45 and interferes with the formation of the eIF4F complex, inhibiting translation and stabilizing mRNA. Binding affinity for eIF4E/TIF45 is 10-fold less than that of eIF4G1/TIF4631. Required for induction of pseudohyphal growth in response to nitrogen limitation, probably by regulating STE12 translation.</text>
</comment>
<comment type="subunit">
    <text evidence="2 4 5 11 12">Interacts with TIF45.</text>
</comment>
<comment type="interaction">
    <interactant intactId="EBI-9010">
        <id>P12962</id>
    </interactant>
    <interactant intactId="EBI-150">
        <id>P07260</id>
        <label>CDC33</label>
    </interactant>
    <organismsDiffer>false</organismsDiffer>
    <experiments>8</experiments>
</comment>
<comment type="subcellular location">
    <subcellularLocation>
        <location evidence="6">Cytoplasm</location>
    </subcellularLocation>
</comment>
<comment type="PTM">
    <text evidence="10">Phosphorylated by casein kinase II complex (CK2).</text>
</comment>
<comment type="miscellaneous">
    <text evidence="7">Present with 26900 molecules/cell in log phase SD medium.</text>
</comment>
<comment type="similarity">
    <text evidence="13">Belongs to the CAF20 family.</text>
</comment>
<comment type="sequence caution" evidence="13">
    <conflict type="erroneous translation">
        <sequence resource="EMBL-CDS" id="AAA16544"/>
    </conflict>
    <text>Wrong choice of frame.</text>
</comment>
<comment type="sequence caution" evidence="13">
    <conflict type="frameshift">
        <sequence resource="EMBL-CDS" id="CAA33752"/>
    </conflict>
</comment>
<sequence>MIKYTIDELFQLKPSLTLEVNFDAVEFRAIIEKVKQLQHLKEEEFNSHHVGHFGRRRSSHHHGRPKIKHNKPKVTTDSDGWCTFEAKKKGSGEDDEEETETTPTSTVPVATIAQETLKVKPNNKNISSNRPADTRDIVADKPILGFNAFAALESEDEDDEA</sequence>
<dbReference type="EMBL" id="X15731">
    <property type="protein sequence ID" value="CAA33752.1"/>
    <property type="status" value="ALT_FRAME"/>
    <property type="molecule type" value="Genomic_DNA"/>
</dbReference>
<dbReference type="EMBL" id="X89633">
    <property type="protein sequence ID" value="CAA61782.1"/>
    <property type="molecule type" value="Genomic_DNA"/>
</dbReference>
<dbReference type="EMBL" id="Z75184">
    <property type="protein sequence ID" value="CAA99501.1"/>
    <property type="molecule type" value="Genomic_DNA"/>
</dbReference>
<dbReference type="EMBL" id="L22433">
    <property type="protein sequence ID" value="AAA16544.1"/>
    <property type="status" value="ALT_SEQ"/>
    <property type="molecule type" value="Unassigned_DNA"/>
</dbReference>
<dbReference type="EMBL" id="BK006948">
    <property type="protein sequence ID" value="DAA11042.1"/>
    <property type="molecule type" value="Genomic_DNA"/>
</dbReference>
<dbReference type="PIR" id="S67178">
    <property type="entry name" value="S67178"/>
</dbReference>
<dbReference type="RefSeq" id="NP_014919.3">
    <property type="nucleotide sequence ID" value="NM_001183695.3"/>
</dbReference>
<dbReference type="PDB" id="6FC3">
    <property type="method" value="X-ray"/>
    <property type="resolution" value="1.75 A"/>
    <property type="chains" value="B=1-49"/>
</dbReference>
<dbReference type="PDBsum" id="6FC3"/>
<dbReference type="SMR" id="P12962"/>
<dbReference type="BioGRID" id="34665">
    <property type="interactions" value="1097"/>
</dbReference>
<dbReference type="DIP" id="DIP-1222N"/>
<dbReference type="ELM" id="P12962"/>
<dbReference type="FunCoup" id="P12962">
    <property type="interactions" value="439"/>
</dbReference>
<dbReference type="IntAct" id="P12962">
    <property type="interactions" value="35"/>
</dbReference>
<dbReference type="MINT" id="P12962"/>
<dbReference type="STRING" id="4932.YOR276W"/>
<dbReference type="iPTMnet" id="P12962"/>
<dbReference type="PaxDb" id="4932-YOR276W"/>
<dbReference type="PeptideAtlas" id="P12962"/>
<dbReference type="EnsemblFungi" id="YOR276W_mRNA">
    <property type="protein sequence ID" value="YOR276W"/>
    <property type="gene ID" value="YOR276W"/>
</dbReference>
<dbReference type="GeneID" id="854450"/>
<dbReference type="KEGG" id="sce:YOR276W"/>
<dbReference type="AGR" id="SGD:S000005802"/>
<dbReference type="SGD" id="S000005802">
    <property type="gene designation" value="CAF20"/>
</dbReference>
<dbReference type="VEuPathDB" id="FungiDB:YOR276W"/>
<dbReference type="eggNOG" id="ENOG502S2E7">
    <property type="taxonomic scope" value="Eukaryota"/>
</dbReference>
<dbReference type="HOGENOM" id="CLU_128343_0_0_1"/>
<dbReference type="InParanoid" id="P12962"/>
<dbReference type="OMA" id="GRPKVKH"/>
<dbReference type="OrthoDB" id="3995390at2759"/>
<dbReference type="BioCyc" id="YEAST:G3O-33765-MONOMER"/>
<dbReference type="BioGRID-ORCS" id="854450">
    <property type="hits" value="0 hits in 10 CRISPR screens"/>
</dbReference>
<dbReference type="PRO" id="PR:P12962"/>
<dbReference type="Proteomes" id="UP000002311">
    <property type="component" value="Chromosome XV"/>
</dbReference>
<dbReference type="RNAct" id="P12962">
    <property type="molecule type" value="protein"/>
</dbReference>
<dbReference type="GO" id="GO:0005737">
    <property type="term" value="C:cytoplasm"/>
    <property type="evidence" value="ECO:0007005"/>
    <property type="project" value="SGD"/>
</dbReference>
<dbReference type="GO" id="GO:0008190">
    <property type="term" value="F:eukaryotic initiation factor 4E binding"/>
    <property type="evidence" value="ECO:0000314"/>
    <property type="project" value="SGD"/>
</dbReference>
<dbReference type="GO" id="GO:0003743">
    <property type="term" value="F:translation initiation factor activity"/>
    <property type="evidence" value="ECO:0007669"/>
    <property type="project" value="UniProtKB-KW"/>
</dbReference>
<dbReference type="GO" id="GO:0030447">
    <property type="term" value="P:filamentous growth"/>
    <property type="evidence" value="ECO:0000315"/>
    <property type="project" value="SGD"/>
</dbReference>
<dbReference type="GO" id="GO:0017148">
    <property type="term" value="P:negative regulation of translation"/>
    <property type="evidence" value="ECO:0000314"/>
    <property type="project" value="SGD"/>
</dbReference>
<dbReference type="GO" id="GO:0010606">
    <property type="term" value="P:positive regulation of cytoplasmic mRNA processing body assembly"/>
    <property type="evidence" value="ECO:0000315"/>
    <property type="project" value="SGD"/>
</dbReference>
<dbReference type="GO" id="GO:0045727">
    <property type="term" value="P:positive regulation of translation"/>
    <property type="evidence" value="ECO:0000315"/>
    <property type="project" value="SGD"/>
</dbReference>
<dbReference type="InterPro" id="IPR031456">
    <property type="entry name" value="Caf20"/>
</dbReference>
<dbReference type="Pfam" id="PF17052">
    <property type="entry name" value="CAF20"/>
    <property type="match status" value="1"/>
</dbReference>
<name>CAF20_YEAST</name>
<keyword id="KW-0002">3D-structure</keyword>
<keyword id="KW-0963">Cytoplasm</keyword>
<keyword id="KW-0396">Initiation factor</keyword>
<keyword id="KW-0597">Phosphoprotein</keyword>
<keyword id="KW-0648">Protein biosynthesis</keyword>
<keyword id="KW-0652">Protein synthesis inhibitor</keyword>
<keyword id="KW-1185">Reference proteome</keyword>
<keyword id="KW-0810">Translation regulation</keyword>
<feature type="chain" id="PRO_0000084163" description="Cap-associated protein CAF20">
    <location>
        <begin position="1"/>
        <end position="161"/>
    </location>
</feature>
<feature type="region of interest" description="Disordered" evidence="1">
    <location>
        <begin position="52"/>
        <end position="108"/>
    </location>
</feature>
<feature type="compositionally biased region" description="Basic residues" evidence="1">
    <location>
        <begin position="52"/>
        <end position="72"/>
    </location>
</feature>
<feature type="modified residue" description="Phosphoserine" evidence="16">
    <location>
        <position position="78"/>
    </location>
</feature>
<feature type="modified residue" description="Phosphoserine" evidence="14 15 16">
    <location>
        <position position="91"/>
    </location>
</feature>
<feature type="modified residue" description="Phosphothreonine" evidence="16">
    <location>
        <position position="99"/>
    </location>
</feature>
<feature type="modified residue" description="Phosphothreonine" evidence="16">
    <location>
        <position position="101"/>
    </location>
</feature>
<feature type="modified residue" description="Phosphothreonine" evidence="14 15 16">
    <location>
        <position position="102"/>
    </location>
</feature>
<feature type="modified residue" description="Phosphoserine" evidence="15 16">
    <location>
        <position position="154"/>
    </location>
</feature>
<feature type="mutagenesis site" description="Reduces interaction with eIF4E/TIF45. Prevents pseudohyphal growth. Further reduces interaction with eIF4E/TIF45; when associated with A-9." evidence="9">
    <original>Y</original>
    <variation>A</variation>
    <location>
        <position position="4"/>
    </location>
</feature>
<feature type="mutagenesis site" description="Further reduces interaction with eIF4E/TIF45; when associated with A-4." evidence="9">
    <original>L</original>
    <variation>A</variation>
    <location>
        <position position="9"/>
    </location>
</feature>
<feature type="helix" evidence="17">
    <location>
        <begin position="6"/>
        <end position="11"/>
    </location>
</feature>
<feature type="helix" evidence="17">
    <location>
        <begin position="24"/>
        <end position="41"/>
    </location>
</feature>
<proteinExistence type="evidence at protein level"/>
<protein>
    <recommendedName>
        <fullName>Cap-associated protein CAF20</fullName>
    </recommendedName>
    <alternativeName>
        <fullName>20 kDa cap-associated protein</fullName>
    </alternativeName>
    <alternativeName>
        <fullName>CCR4-associated factor 2</fullName>
    </alternativeName>
    <alternativeName>
        <fullName>p20</fullName>
    </alternativeName>
</protein>
<organism>
    <name type="scientific">Saccharomyces cerevisiae (strain ATCC 204508 / S288c)</name>
    <name type="common">Baker's yeast</name>
    <dbReference type="NCBI Taxonomy" id="559292"/>
    <lineage>
        <taxon>Eukaryota</taxon>
        <taxon>Fungi</taxon>
        <taxon>Dikarya</taxon>
        <taxon>Ascomycota</taxon>
        <taxon>Saccharomycotina</taxon>
        <taxon>Saccharomycetes</taxon>
        <taxon>Saccharomycetales</taxon>
        <taxon>Saccharomycetaceae</taxon>
        <taxon>Saccharomyces</taxon>
    </lineage>
</organism>